<sequence length="147" mass="16822">MCDLLPHVPCQDSDDIQGAFPALKNHATECGSIRTARAIVWQEPRRAHKHNCVQCQLPFLFVFTRIECCIELGPKLSIQFFIKRYRVELCNSRHAALPLDYVFSVISAISPRYAFPPSSLIPYNAFPSNLIDRMEGKSHPFHSSDRY</sequence>
<evidence type="ECO:0000305" key="1"/>
<evidence type="ECO:0000305" key="2">
    <source>
    </source>
</evidence>
<proteinExistence type="uncertain"/>
<reference key="1">
    <citation type="journal article" date="1994" name="Yeast">
        <title>Sequence analysis of a 40.2 kb DNA fragment located near the left telomere of yeast chromosome X.</title>
        <authorList>
            <person name="Vandenbol M."/>
            <person name="Durand P."/>
            <person name="Bolle P.-A."/>
            <person name="Dion C."/>
            <person name="Portetelle D."/>
            <person name="Hilger F."/>
        </authorList>
    </citation>
    <scope>NUCLEOTIDE SEQUENCE [GENOMIC DNA]</scope>
    <source>
        <strain>ATCC 204508 / S288c</strain>
    </source>
</reference>
<reference key="2">
    <citation type="journal article" date="1996" name="EMBO J.">
        <title>Complete nucleotide sequence of Saccharomyces cerevisiae chromosome X.</title>
        <authorList>
            <person name="Galibert F."/>
            <person name="Alexandraki D."/>
            <person name="Baur A."/>
            <person name="Boles E."/>
            <person name="Chalwatzis N."/>
            <person name="Chuat J.-C."/>
            <person name="Coster F."/>
            <person name="Cziepluch C."/>
            <person name="de Haan M."/>
            <person name="Domdey H."/>
            <person name="Durand P."/>
            <person name="Entian K.-D."/>
            <person name="Gatius M."/>
            <person name="Goffeau A."/>
            <person name="Grivell L.A."/>
            <person name="Hennemann A."/>
            <person name="Herbert C.J."/>
            <person name="Heumann K."/>
            <person name="Hilger F."/>
            <person name="Hollenberg C.P."/>
            <person name="Huang M.-E."/>
            <person name="Jacq C."/>
            <person name="Jauniaux J.-C."/>
            <person name="Katsoulou C."/>
            <person name="Kirchrath L."/>
            <person name="Kleine K."/>
            <person name="Kordes E."/>
            <person name="Koetter P."/>
            <person name="Liebl S."/>
            <person name="Louis E.J."/>
            <person name="Manus V."/>
            <person name="Mewes H.-W."/>
            <person name="Miosga T."/>
            <person name="Obermaier B."/>
            <person name="Perea J."/>
            <person name="Pohl T.M."/>
            <person name="Portetelle D."/>
            <person name="Pujol A."/>
            <person name="Purnelle B."/>
            <person name="Ramezani Rad M."/>
            <person name="Rasmussen S.W."/>
            <person name="Rose M."/>
            <person name="Rossau R."/>
            <person name="Schaaff-Gerstenschlaeger I."/>
            <person name="Smits P.H.M."/>
            <person name="Scarcez T."/>
            <person name="Soriano N."/>
            <person name="To Van D."/>
            <person name="Tzermia M."/>
            <person name="Van Broekhoven A."/>
            <person name="Vandenbol M."/>
            <person name="Wedler H."/>
            <person name="von Wettstein D."/>
            <person name="Wambutt R."/>
            <person name="Zagulski M."/>
            <person name="Zollner A."/>
            <person name="Karpfinger-Hartl L."/>
        </authorList>
    </citation>
    <scope>NUCLEOTIDE SEQUENCE [LARGE SCALE GENOMIC DNA]</scope>
    <source>
        <strain>ATCC 204508 / S288c</strain>
    </source>
</reference>
<reference key="3">
    <citation type="journal article" date="2014" name="G3 (Bethesda)">
        <title>The reference genome sequence of Saccharomyces cerevisiae: Then and now.</title>
        <authorList>
            <person name="Engel S.R."/>
            <person name="Dietrich F.S."/>
            <person name="Fisk D.G."/>
            <person name="Binkley G."/>
            <person name="Balakrishnan R."/>
            <person name="Costanzo M.C."/>
            <person name="Dwight S.S."/>
            <person name="Hitz B.C."/>
            <person name="Karra K."/>
            <person name="Nash R.S."/>
            <person name="Weng S."/>
            <person name="Wong E.D."/>
            <person name="Lloyd P."/>
            <person name="Skrzypek M.S."/>
            <person name="Miyasato S.R."/>
            <person name="Simison M."/>
            <person name="Cherry J.M."/>
        </authorList>
    </citation>
    <scope>GENOME REANNOTATION</scope>
    <source>
        <strain>ATCC 204508 / S288c</strain>
    </source>
</reference>
<dbReference type="EMBL" id="Z34098">
    <property type="protein sequence ID" value="CAA84001.1"/>
    <property type="molecule type" value="Genomic_DNA"/>
</dbReference>
<dbReference type="EMBL" id="Z49486">
    <property type="protein sequence ID" value="CAA89507.1"/>
    <property type="molecule type" value="Genomic_DNA"/>
</dbReference>
<dbReference type="PIR" id="S50775">
    <property type="entry name" value="S50775"/>
</dbReference>
<dbReference type="DIP" id="DIP-1607N"/>
<dbReference type="IntAct" id="P40898">
    <property type="interactions" value="1"/>
</dbReference>
<dbReference type="MINT" id="P40898"/>
<dbReference type="STRING" id="4932.YJL211C"/>
<dbReference type="PaxDb" id="4932-YJL211C"/>
<dbReference type="EnsemblFungi" id="YJL211C_mRNA">
    <property type="protein sequence ID" value="YJL211C"/>
    <property type="gene ID" value="YJL211C"/>
</dbReference>
<dbReference type="AGR" id="SGD:S000003747"/>
<dbReference type="SGD" id="S000003747">
    <property type="gene designation" value="YJL211C"/>
</dbReference>
<dbReference type="HOGENOM" id="CLU_1769537_0_0_1"/>
<comment type="miscellaneous">
    <text evidence="1">Partially overlaps PEX2.</text>
</comment>
<comment type="caution">
    <text evidence="2">Product of a dubious gene prediction unlikely to encode a functional protein. Because of that it is not part of the S.cerevisiae S288c complete/reference proteome set.</text>
</comment>
<accession>P40898</accession>
<feature type="chain" id="PRO_0000203014" description="Putative uncharacterized protein YJL211C">
    <location>
        <begin position="1"/>
        <end position="147"/>
    </location>
</feature>
<organism>
    <name type="scientific">Saccharomyces cerevisiae (strain ATCC 204508 / S288c)</name>
    <name type="common">Baker's yeast</name>
    <dbReference type="NCBI Taxonomy" id="559292"/>
    <lineage>
        <taxon>Eukaryota</taxon>
        <taxon>Fungi</taxon>
        <taxon>Dikarya</taxon>
        <taxon>Ascomycota</taxon>
        <taxon>Saccharomycotina</taxon>
        <taxon>Saccharomycetes</taxon>
        <taxon>Saccharomycetales</taxon>
        <taxon>Saccharomycetaceae</taxon>
        <taxon>Saccharomyces</taxon>
    </lineage>
</organism>
<gene>
    <name type="ordered locus">YJL211C</name>
    <name type="ORF">HRD147</name>
    <name type="ORF">J0238</name>
</gene>
<name>YJV1_YEAST</name>
<protein>
    <recommendedName>
        <fullName>Putative uncharacterized protein YJL211C</fullName>
    </recommendedName>
</protein>